<reference key="1">
    <citation type="journal article" date="2009" name="PLoS Genet.">
        <title>Organised genome dynamics in the Escherichia coli species results in highly diverse adaptive paths.</title>
        <authorList>
            <person name="Touchon M."/>
            <person name="Hoede C."/>
            <person name="Tenaillon O."/>
            <person name="Barbe V."/>
            <person name="Baeriswyl S."/>
            <person name="Bidet P."/>
            <person name="Bingen E."/>
            <person name="Bonacorsi S."/>
            <person name="Bouchier C."/>
            <person name="Bouvet O."/>
            <person name="Calteau A."/>
            <person name="Chiapello H."/>
            <person name="Clermont O."/>
            <person name="Cruveiller S."/>
            <person name="Danchin A."/>
            <person name="Diard M."/>
            <person name="Dossat C."/>
            <person name="Karoui M.E."/>
            <person name="Frapy E."/>
            <person name="Garry L."/>
            <person name="Ghigo J.M."/>
            <person name="Gilles A.M."/>
            <person name="Johnson J."/>
            <person name="Le Bouguenec C."/>
            <person name="Lescat M."/>
            <person name="Mangenot S."/>
            <person name="Martinez-Jehanne V."/>
            <person name="Matic I."/>
            <person name="Nassif X."/>
            <person name="Oztas S."/>
            <person name="Petit M.A."/>
            <person name="Pichon C."/>
            <person name="Rouy Z."/>
            <person name="Ruf C.S."/>
            <person name="Schneider D."/>
            <person name="Tourret J."/>
            <person name="Vacherie B."/>
            <person name="Vallenet D."/>
            <person name="Medigue C."/>
            <person name="Rocha E.P.C."/>
            <person name="Denamur E."/>
        </authorList>
    </citation>
    <scope>NUCLEOTIDE SEQUENCE [LARGE SCALE GENOMIC DNA]</scope>
    <source>
        <strain>UMN026 / ExPEC</strain>
    </source>
</reference>
<proteinExistence type="inferred from homology"/>
<accession>B7NFS3</accession>
<name>RL11_ECOLU</name>
<gene>
    <name evidence="1" type="primary">rplK</name>
    <name type="ordered locus">ECUMN_4505</name>
</gene>
<feature type="chain" id="PRO_1000195633" description="Large ribosomal subunit protein uL11">
    <location>
        <begin position="1"/>
        <end position="142"/>
    </location>
</feature>
<dbReference type="EMBL" id="CU928163">
    <property type="protein sequence ID" value="CAR15630.1"/>
    <property type="molecule type" value="Genomic_DNA"/>
</dbReference>
<dbReference type="RefSeq" id="WP_001085926.1">
    <property type="nucleotide sequence ID" value="NC_011751.1"/>
</dbReference>
<dbReference type="RefSeq" id="YP_002415120.1">
    <property type="nucleotide sequence ID" value="NC_011751.1"/>
</dbReference>
<dbReference type="SMR" id="B7NFS3"/>
<dbReference type="STRING" id="585056.ECUMN_4505"/>
<dbReference type="GeneID" id="93777911"/>
<dbReference type="KEGG" id="eum:ECUMN_4505"/>
<dbReference type="PATRIC" id="fig|585056.7.peg.4676"/>
<dbReference type="HOGENOM" id="CLU_074237_2_0_6"/>
<dbReference type="Proteomes" id="UP000007097">
    <property type="component" value="Chromosome"/>
</dbReference>
<dbReference type="GO" id="GO:0022625">
    <property type="term" value="C:cytosolic large ribosomal subunit"/>
    <property type="evidence" value="ECO:0007669"/>
    <property type="project" value="TreeGrafter"/>
</dbReference>
<dbReference type="GO" id="GO:0070180">
    <property type="term" value="F:large ribosomal subunit rRNA binding"/>
    <property type="evidence" value="ECO:0007669"/>
    <property type="project" value="UniProtKB-UniRule"/>
</dbReference>
<dbReference type="GO" id="GO:0003735">
    <property type="term" value="F:structural constituent of ribosome"/>
    <property type="evidence" value="ECO:0007669"/>
    <property type="project" value="InterPro"/>
</dbReference>
<dbReference type="GO" id="GO:0006412">
    <property type="term" value="P:translation"/>
    <property type="evidence" value="ECO:0007669"/>
    <property type="project" value="UniProtKB-UniRule"/>
</dbReference>
<dbReference type="CDD" id="cd00349">
    <property type="entry name" value="Ribosomal_L11"/>
    <property type="match status" value="1"/>
</dbReference>
<dbReference type="FunFam" id="1.10.10.250:FF:000001">
    <property type="entry name" value="50S ribosomal protein L11"/>
    <property type="match status" value="1"/>
</dbReference>
<dbReference type="FunFam" id="3.30.1550.10:FF:000001">
    <property type="entry name" value="50S ribosomal protein L11"/>
    <property type="match status" value="1"/>
</dbReference>
<dbReference type="Gene3D" id="1.10.10.250">
    <property type="entry name" value="Ribosomal protein L11, C-terminal domain"/>
    <property type="match status" value="1"/>
</dbReference>
<dbReference type="Gene3D" id="3.30.1550.10">
    <property type="entry name" value="Ribosomal protein L11/L12, N-terminal domain"/>
    <property type="match status" value="1"/>
</dbReference>
<dbReference type="HAMAP" id="MF_00736">
    <property type="entry name" value="Ribosomal_uL11"/>
    <property type="match status" value="1"/>
</dbReference>
<dbReference type="InterPro" id="IPR000911">
    <property type="entry name" value="Ribosomal_uL11"/>
</dbReference>
<dbReference type="InterPro" id="IPR006519">
    <property type="entry name" value="Ribosomal_uL11_bac-typ"/>
</dbReference>
<dbReference type="InterPro" id="IPR020783">
    <property type="entry name" value="Ribosomal_uL11_C"/>
</dbReference>
<dbReference type="InterPro" id="IPR036769">
    <property type="entry name" value="Ribosomal_uL11_C_sf"/>
</dbReference>
<dbReference type="InterPro" id="IPR020785">
    <property type="entry name" value="Ribosomal_uL11_CS"/>
</dbReference>
<dbReference type="InterPro" id="IPR020784">
    <property type="entry name" value="Ribosomal_uL11_N"/>
</dbReference>
<dbReference type="InterPro" id="IPR036796">
    <property type="entry name" value="Ribosomal_uL11_N_sf"/>
</dbReference>
<dbReference type="NCBIfam" id="TIGR01632">
    <property type="entry name" value="L11_bact"/>
    <property type="match status" value="1"/>
</dbReference>
<dbReference type="PANTHER" id="PTHR11661">
    <property type="entry name" value="60S RIBOSOMAL PROTEIN L12"/>
    <property type="match status" value="1"/>
</dbReference>
<dbReference type="PANTHER" id="PTHR11661:SF1">
    <property type="entry name" value="LARGE RIBOSOMAL SUBUNIT PROTEIN UL11M"/>
    <property type="match status" value="1"/>
</dbReference>
<dbReference type="Pfam" id="PF00298">
    <property type="entry name" value="Ribosomal_L11"/>
    <property type="match status" value="1"/>
</dbReference>
<dbReference type="Pfam" id="PF03946">
    <property type="entry name" value="Ribosomal_L11_N"/>
    <property type="match status" value="1"/>
</dbReference>
<dbReference type="SMART" id="SM00649">
    <property type="entry name" value="RL11"/>
    <property type="match status" value="1"/>
</dbReference>
<dbReference type="SUPFAM" id="SSF54747">
    <property type="entry name" value="Ribosomal L11/L12e N-terminal domain"/>
    <property type="match status" value="1"/>
</dbReference>
<dbReference type="SUPFAM" id="SSF46906">
    <property type="entry name" value="Ribosomal protein L11, C-terminal domain"/>
    <property type="match status" value="1"/>
</dbReference>
<dbReference type="PROSITE" id="PS00359">
    <property type="entry name" value="RIBOSOMAL_L11"/>
    <property type="match status" value="1"/>
</dbReference>
<sequence>MAKKVQAYVKLQVAAGMANPSPPVGPALGQQGVNIMEFCKAFNAKTDSIEKGLPIPVVITVYADRSFTFVTKTPPAAVLLKKAAGIKSGSGKPNKDKVGKISRAQLQEIAQTKAADMTGADIEAMTRSIEGTARSMGLVVED</sequence>
<evidence type="ECO:0000255" key="1">
    <source>
        <dbReference type="HAMAP-Rule" id="MF_00736"/>
    </source>
</evidence>
<evidence type="ECO:0000305" key="2"/>
<protein>
    <recommendedName>
        <fullName evidence="1">Large ribosomal subunit protein uL11</fullName>
    </recommendedName>
    <alternativeName>
        <fullName evidence="2">50S ribosomal protein L11</fullName>
    </alternativeName>
</protein>
<keyword id="KW-0488">Methylation</keyword>
<keyword id="KW-0687">Ribonucleoprotein</keyword>
<keyword id="KW-0689">Ribosomal protein</keyword>
<keyword id="KW-0694">RNA-binding</keyword>
<keyword id="KW-0699">rRNA-binding</keyword>
<organism>
    <name type="scientific">Escherichia coli O17:K52:H18 (strain UMN026 / ExPEC)</name>
    <dbReference type="NCBI Taxonomy" id="585056"/>
    <lineage>
        <taxon>Bacteria</taxon>
        <taxon>Pseudomonadati</taxon>
        <taxon>Pseudomonadota</taxon>
        <taxon>Gammaproteobacteria</taxon>
        <taxon>Enterobacterales</taxon>
        <taxon>Enterobacteriaceae</taxon>
        <taxon>Escherichia</taxon>
    </lineage>
</organism>
<comment type="function">
    <text evidence="1">Forms part of the ribosomal stalk which helps the ribosome interact with GTP-bound translation factors.</text>
</comment>
<comment type="subunit">
    <text evidence="1">Part of the ribosomal stalk of the 50S ribosomal subunit. Interacts with L10 and the large rRNA to form the base of the stalk. L10 forms an elongated spine to which L12 dimers bind in a sequential fashion forming a multimeric L10(L12)X complex.</text>
</comment>
<comment type="PTM">
    <text evidence="1">One or more lysine residues are methylated.</text>
</comment>
<comment type="similarity">
    <text evidence="1">Belongs to the universal ribosomal protein uL11 family.</text>
</comment>